<organism>
    <name type="scientific">Pongo abelii</name>
    <name type="common">Sumatran orangutan</name>
    <name type="synonym">Pongo pygmaeus abelii</name>
    <dbReference type="NCBI Taxonomy" id="9601"/>
    <lineage>
        <taxon>Eukaryota</taxon>
        <taxon>Metazoa</taxon>
        <taxon>Chordata</taxon>
        <taxon>Craniata</taxon>
        <taxon>Vertebrata</taxon>
        <taxon>Euteleostomi</taxon>
        <taxon>Mammalia</taxon>
        <taxon>Eutheria</taxon>
        <taxon>Euarchontoglires</taxon>
        <taxon>Primates</taxon>
        <taxon>Haplorrhini</taxon>
        <taxon>Catarrhini</taxon>
        <taxon>Hominidae</taxon>
        <taxon>Pongo</taxon>
    </lineage>
</organism>
<protein>
    <recommendedName>
        <fullName>Multiple coagulation factor deficiency protein 2 homolog</fullName>
    </recommendedName>
</protein>
<sequence>MTMRSLLRTPFLCGLLWAFCAPGARAEEPAASFSQPGSMGLDKNTVHDQEHIMEHLEGVINKPEAEMSPQELQLHYFKMHDYDGNNLLDGLELSTAITHVHKEEGSEQAPLMSEDELINIIDGVLRDDDKNNDGYIDYAEFAKSLQ</sequence>
<comment type="function">
    <text evidence="1">The MCFD2-LMAN1 complex forms a specific cargo receptor for the ER-to-Golgi transport of selected proteins.</text>
</comment>
<comment type="subunit">
    <text evidence="1">Interacts in a calcium-dependent manner with LMAN1.</text>
</comment>
<comment type="subcellular location">
    <subcellularLocation>
        <location evidence="1">Endoplasmic reticulum-Golgi intermediate compartment</location>
    </subcellularLocation>
    <subcellularLocation>
        <location evidence="1">Endoplasmic reticulum</location>
    </subcellularLocation>
    <subcellularLocation>
        <location evidence="1">Golgi apparatus</location>
    </subcellularLocation>
</comment>
<accession>Q5R8Z6</accession>
<proteinExistence type="evidence at transcript level"/>
<feature type="signal peptide" evidence="3">
    <location>
        <begin position="1"/>
        <end position="26"/>
    </location>
</feature>
<feature type="chain" id="PRO_0000240317" description="Multiple coagulation factor deficiency protein 2 homolog">
    <location>
        <begin position="27"/>
        <end position="146"/>
    </location>
</feature>
<feature type="domain" description="EF-hand 1" evidence="4">
    <location>
        <begin position="68"/>
        <end position="103"/>
    </location>
</feature>
<feature type="domain" description="EF-hand 2" evidence="4">
    <location>
        <begin position="116"/>
        <end position="146"/>
    </location>
</feature>
<feature type="binding site" evidence="4">
    <location>
        <position position="81"/>
    </location>
    <ligand>
        <name>Ca(2+)</name>
        <dbReference type="ChEBI" id="CHEBI:29108"/>
        <label>1</label>
    </ligand>
</feature>
<feature type="binding site" evidence="4">
    <location>
        <position position="83"/>
    </location>
    <ligand>
        <name>Ca(2+)</name>
        <dbReference type="ChEBI" id="CHEBI:29108"/>
        <label>1</label>
    </ligand>
</feature>
<feature type="binding site" evidence="4">
    <location>
        <position position="85"/>
    </location>
    <ligand>
        <name>Ca(2+)</name>
        <dbReference type="ChEBI" id="CHEBI:29108"/>
        <label>1</label>
    </ligand>
</feature>
<feature type="binding site" evidence="4">
    <location>
        <position position="92"/>
    </location>
    <ligand>
        <name>Ca(2+)</name>
        <dbReference type="ChEBI" id="CHEBI:29108"/>
        <label>1</label>
    </ligand>
</feature>
<feature type="binding site" evidence="4">
    <location>
        <position position="129"/>
    </location>
    <ligand>
        <name>Ca(2+)</name>
        <dbReference type="ChEBI" id="CHEBI:29108"/>
        <label>2</label>
    </ligand>
</feature>
<feature type="binding site" evidence="4">
    <location>
        <position position="131"/>
    </location>
    <ligand>
        <name>Ca(2+)</name>
        <dbReference type="ChEBI" id="CHEBI:29108"/>
        <label>2</label>
    </ligand>
</feature>
<feature type="binding site" evidence="4">
    <location>
        <position position="133"/>
    </location>
    <ligand>
        <name>Ca(2+)</name>
        <dbReference type="ChEBI" id="CHEBI:29108"/>
        <label>2</label>
    </ligand>
</feature>
<feature type="binding site" evidence="4">
    <location>
        <position position="135"/>
    </location>
    <ligand>
        <name>Ca(2+)</name>
        <dbReference type="ChEBI" id="CHEBI:29108"/>
        <label>2</label>
    </ligand>
</feature>
<feature type="binding site" evidence="4">
    <location>
        <position position="140"/>
    </location>
    <ligand>
        <name>Ca(2+)</name>
        <dbReference type="ChEBI" id="CHEBI:29108"/>
        <label>2</label>
    </ligand>
</feature>
<feature type="modified residue" description="Phosphoserine" evidence="2">
    <location>
        <position position="106"/>
    </location>
</feature>
<dbReference type="EMBL" id="CR858179">
    <property type="protein sequence ID" value="CAH90418.1"/>
    <property type="molecule type" value="mRNA"/>
</dbReference>
<dbReference type="EMBL" id="CR859601">
    <property type="protein sequence ID" value="CAH91764.1"/>
    <property type="molecule type" value="mRNA"/>
</dbReference>
<dbReference type="RefSeq" id="NP_001127284.1">
    <property type="nucleotide sequence ID" value="NM_001133812.1"/>
</dbReference>
<dbReference type="RefSeq" id="XP_009235607.1">
    <property type="nucleotide sequence ID" value="XM_009237332.1"/>
</dbReference>
<dbReference type="RefSeq" id="XP_009235608.1">
    <property type="nucleotide sequence ID" value="XM_009237333.1"/>
</dbReference>
<dbReference type="RefSeq" id="XP_009235612.1">
    <property type="nucleotide sequence ID" value="XM_009237337.1"/>
</dbReference>
<dbReference type="RefSeq" id="XP_009235613.1">
    <property type="nucleotide sequence ID" value="XM_009237338.1"/>
</dbReference>
<dbReference type="BMRB" id="Q5R8Z6"/>
<dbReference type="SMR" id="Q5R8Z6"/>
<dbReference type="FunCoup" id="Q5R8Z6">
    <property type="interactions" value="451"/>
</dbReference>
<dbReference type="STRING" id="9601.ENSPPYP00000013885"/>
<dbReference type="Ensembl" id="ENSPPYT00000048350.1">
    <property type="protein sequence ID" value="ENSPPYP00000040669.1"/>
    <property type="gene ID" value="ENSPPYG00000036629.1"/>
</dbReference>
<dbReference type="GeneID" id="100174341"/>
<dbReference type="KEGG" id="pon:100174341"/>
<dbReference type="CTD" id="90411"/>
<dbReference type="eggNOG" id="KOG4065">
    <property type="taxonomic scope" value="Eukaryota"/>
</dbReference>
<dbReference type="GeneTree" id="ENSGT00940000154141"/>
<dbReference type="HOGENOM" id="CLU_1179904_0_0_1"/>
<dbReference type="InParanoid" id="Q5R8Z6"/>
<dbReference type="OMA" id="MQTLASW"/>
<dbReference type="OrthoDB" id="289247at2759"/>
<dbReference type="Proteomes" id="UP000001595">
    <property type="component" value="Chromosome 2A"/>
</dbReference>
<dbReference type="GO" id="GO:0005783">
    <property type="term" value="C:endoplasmic reticulum"/>
    <property type="evidence" value="ECO:0007669"/>
    <property type="project" value="UniProtKB-SubCell"/>
</dbReference>
<dbReference type="GO" id="GO:0005793">
    <property type="term" value="C:endoplasmic reticulum-Golgi intermediate compartment"/>
    <property type="evidence" value="ECO:0007669"/>
    <property type="project" value="UniProtKB-SubCell"/>
</dbReference>
<dbReference type="GO" id="GO:0005794">
    <property type="term" value="C:Golgi apparatus"/>
    <property type="evidence" value="ECO:0007669"/>
    <property type="project" value="UniProtKB-SubCell"/>
</dbReference>
<dbReference type="GO" id="GO:0005509">
    <property type="term" value="F:calcium ion binding"/>
    <property type="evidence" value="ECO:0007669"/>
    <property type="project" value="InterPro"/>
</dbReference>
<dbReference type="GO" id="GO:0015031">
    <property type="term" value="P:protein transport"/>
    <property type="evidence" value="ECO:0007669"/>
    <property type="project" value="UniProtKB-KW"/>
</dbReference>
<dbReference type="GO" id="GO:0016192">
    <property type="term" value="P:vesicle-mediated transport"/>
    <property type="evidence" value="ECO:0007669"/>
    <property type="project" value="UniProtKB-KW"/>
</dbReference>
<dbReference type="FunFam" id="1.10.238.10:FF:000117">
    <property type="entry name" value="multiple coagulation factor deficiency protein 2"/>
    <property type="match status" value="1"/>
</dbReference>
<dbReference type="Gene3D" id="1.10.238.10">
    <property type="entry name" value="EF-hand"/>
    <property type="match status" value="1"/>
</dbReference>
<dbReference type="InterPro" id="IPR011992">
    <property type="entry name" value="EF-hand-dom_pair"/>
</dbReference>
<dbReference type="InterPro" id="IPR018247">
    <property type="entry name" value="EF_Hand_1_Ca_BS"/>
</dbReference>
<dbReference type="InterPro" id="IPR002048">
    <property type="entry name" value="EF_hand_dom"/>
</dbReference>
<dbReference type="InterPro" id="IPR052110">
    <property type="entry name" value="ER-Golgi_Adhesion_Reg"/>
</dbReference>
<dbReference type="PANTHER" id="PTHR23104:SF14">
    <property type="entry name" value="MULTIPLE COAGULATION FACTOR DEFICIENCY PROTEIN 2"/>
    <property type="match status" value="1"/>
</dbReference>
<dbReference type="PANTHER" id="PTHR23104">
    <property type="entry name" value="MULTIPLE COAGULATION FACTOR DEFICIENCY PROTEIN 2 NEURAL STEM CELL DERIVED NEURONAL SURVIVAL PROTEIN"/>
    <property type="match status" value="1"/>
</dbReference>
<dbReference type="Pfam" id="PF13499">
    <property type="entry name" value="EF-hand_7"/>
    <property type="match status" value="1"/>
</dbReference>
<dbReference type="SUPFAM" id="SSF47473">
    <property type="entry name" value="EF-hand"/>
    <property type="match status" value="1"/>
</dbReference>
<dbReference type="PROSITE" id="PS00018">
    <property type="entry name" value="EF_HAND_1"/>
    <property type="match status" value="2"/>
</dbReference>
<dbReference type="PROSITE" id="PS50222">
    <property type="entry name" value="EF_HAND_2"/>
    <property type="match status" value="2"/>
</dbReference>
<gene>
    <name type="primary">MCFD2</name>
</gene>
<name>MCFD2_PONAB</name>
<evidence type="ECO:0000250" key="1"/>
<evidence type="ECO:0000250" key="2">
    <source>
        <dbReference type="UniProtKB" id="Q8K5B3"/>
    </source>
</evidence>
<evidence type="ECO:0000255" key="3"/>
<evidence type="ECO:0000255" key="4">
    <source>
        <dbReference type="PROSITE-ProRule" id="PRU00448"/>
    </source>
</evidence>
<reference key="1">
    <citation type="submission" date="2004-11" db="EMBL/GenBank/DDBJ databases">
        <authorList>
            <consortium name="The German cDNA consortium"/>
        </authorList>
    </citation>
    <scope>NUCLEOTIDE SEQUENCE [LARGE SCALE MRNA]</scope>
    <source>
        <tissue>Brain cortex</tissue>
        <tissue>Kidney</tissue>
    </source>
</reference>
<keyword id="KW-0106">Calcium</keyword>
<keyword id="KW-0256">Endoplasmic reticulum</keyword>
<keyword id="KW-0931">ER-Golgi transport</keyword>
<keyword id="KW-0333">Golgi apparatus</keyword>
<keyword id="KW-0479">Metal-binding</keyword>
<keyword id="KW-0597">Phosphoprotein</keyword>
<keyword id="KW-0653">Protein transport</keyword>
<keyword id="KW-1185">Reference proteome</keyword>
<keyword id="KW-0677">Repeat</keyword>
<keyword id="KW-0732">Signal</keyword>
<keyword id="KW-0813">Transport</keyword>